<feature type="transit peptide" description="Mitochondrion" evidence="2">
    <location>
        <begin position="1"/>
        <end position="53"/>
    </location>
</feature>
<feature type="chain" id="PRO_0000033353" description="Succinate--CoA ligase [ADP-forming] subunit beta, mitochondrial" evidence="2">
    <location>
        <begin position="54"/>
        <end position="463"/>
    </location>
</feature>
<feature type="domain" description="ATP-grasp" evidence="2">
    <location>
        <begin position="61"/>
        <end position="288"/>
    </location>
</feature>
<feature type="binding site" evidence="2">
    <location>
        <position position="98"/>
    </location>
    <ligand>
        <name>ATP</name>
        <dbReference type="ChEBI" id="CHEBI:30616"/>
    </ligand>
</feature>
<feature type="binding site" evidence="2">
    <location>
        <begin position="105"/>
        <end position="107"/>
    </location>
    <ligand>
        <name>ATP</name>
        <dbReference type="ChEBI" id="CHEBI:30616"/>
    </ligand>
</feature>
<feature type="binding site" evidence="2">
    <location>
        <position position="258"/>
    </location>
    <ligand>
        <name>Mg(2+)</name>
        <dbReference type="ChEBI" id="CHEBI:18420"/>
    </ligand>
</feature>
<feature type="binding site" evidence="2">
    <location>
        <position position="272"/>
    </location>
    <ligand>
        <name>Mg(2+)</name>
        <dbReference type="ChEBI" id="CHEBI:18420"/>
    </ligand>
</feature>
<feature type="binding site" evidence="2">
    <location>
        <position position="323"/>
    </location>
    <ligand>
        <name>substrate</name>
        <note>ligand shared with subunit alpha</note>
    </ligand>
</feature>
<feature type="binding site" evidence="2">
    <location>
        <begin position="380"/>
        <end position="382"/>
    </location>
    <ligand>
        <name>substrate</name>
        <note>ligand shared with subunit alpha</note>
    </ligand>
</feature>
<feature type="site" description="Important for substrate specificity" evidence="2">
    <location>
        <position position="94"/>
    </location>
</feature>
<feature type="site" description="Important for substrate specificity" evidence="2">
    <location>
        <position position="162"/>
    </location>
</feature>
<feature type="modified residue" description="N6-acetyllysine" evidence="4">
    <location>
        <position position="78"/>
    </location>
</feature>
<feature type="modified residue" description="Phosphotyrosine" evidence="1">
    <location>
        <position position="84"/>
    </location>
</feature>
<feature type="modified residue" description="N6-acetyllysine; alternate" evidence="4">
    <location>
        <position position="88"/>
    </location>
</feature>
<feature type="modified residue" description="N6-succinyllysine; alternate" evidence="5">
    <location>
        <position position="88"/>
    </location>
</feature>
<feature type="modified residue" description="N6-acetyllysine" evidence="4">
    <location>
        <position position="129"/>
    </location>
</feature>
<feature type="modified residue" description="N6-acetyllysine" evidence="4">
    <location>
        <position position="139"/>
    </location>
</feature>
<feature type="modified residue" description="N6-acetyllysine" evidence="1">
    <location>
        <position position="143"/>
    </location>
</feature>
<feature type="modified residue" description="N6-acetyllysine" evidence="4">
    <location>
        <position position="216"/>
    </location>
</feature>
<feature type="modified residue" description="Phosphoserine" evidence="3">
    <location>
        <position position="279"/>
    </location>
</feature>
<feature type="modified residue" description="Phosphothreonine" evidence="3">
    <location>
        <position position="341"/>
    </location>
</feature>
<feature type="modified residue" description="N6-acetyllysine" evidence="4">
    <location>
        <position position="368"/>
    </location>
</feature>
<feature type="modified residue" description="N6-acetyllysine" evidence="4">
    <location>
        <position position="438"/>
    </location>
</feature>
<protein>
    <recommendedName>
        <fullName evidence="2">Succinate--CoA ligase [ADP-forming] subunit beta, mitochondrial</fullName>
        <ecNumber evidence="2">6.2.1.5</ecNumber>
    </recommendedName>
    <alternativeName>
        <fullName evidence="2">ATP-specific succinyl-CoA synthetase subunit beta</fullName>
        <shortName evidence="2">A-SCS</shortName>
    </alternativeName>
    <alternativeName>
        <fullName evidence="2">Succinyl-CoA synthetase beta-A chain</fullName>
        <shortName evidence="2">SCS-betaA</shortName>
    </alternativeName>
</protein>
<reference key="1">
    <citation type="journal article" date="2005" name="Science">
        <title>The transcriptional landscape of the mammalian genome.</title>
        <authorList>
            <person name="Carninci P."/>
            <person name="Kasukawa T."/>
            <person name="Katayama S."/>
            <person name="Gough J."/>
            <person name="Frith M.C."/>
            <person name="Maeda N."/>
            <person name="Oyama R."/>
            <person name="Ravasi T."/>
            <person name="Lenhard B."/>
            <person name="Wells C."/>
            <person name="Kodzius R."/>
            <person name="Shimokawa K."/>
            <person name="Bajic V.B."/>
            <person name="Brenner S.E."/>
            <person name="Batalov S."/>
            <person name="Forrest A.R."/>
            <person name="Zavolan M."/>
            <person name="Davis M.J."/>
            <person name="Wilming L.G."/>
            <person name="Aidinis V."/>
            <person name="Allen J.E."/>
            <person name="Ambesi-Impiombato A."/>
            <person name="Apweiler R."/>
            <person name="Aturaliya R.N."/>
            <person name="Bailey T.L."/>
            <person name="Bansal M."/>
            <person name="Baxter L."/>
            <person name="Beisel K.W."/>
            <person name="Bersano T."/>
            <person name="Bono H."/>
            <person name="Chalk A.M."/>
            <person name="Chiu K.P."/>
            <person name="Choudhary V."/>
            <person name="Christoffels A."/>
            <person name="Clutterbuck D.R."/>
            <person name="Crowe M.L."/>
            <person name="Dalla E."/>
            <person name="Dalrymple B.P."/>
            <person name="de Bono B."/>
            <person name="Della Gatta G."/>
            <person name="di Bernardo D."/>
            <person name="Down T."/>
            <person name="Engstrom P."/>
            <person name="Fagiolini M."/>
            <person name="Faulkner G."/>
            <person name="Fletcher C.F."/>
            <person name="Fukushima T."/>
            <person name="Furuno M."/>
            <person name="Futaki S."/>
            <person name="Gariboldi M."/>
            <person name="Georgii-Hemming P."/>
            <person name="Gingeras T.R."/>
            <person name="Gojobori T."/>
            <person name="Green R.E."/>
            <person name="Gustincich S."/>
            <person name="Harbers M."/>
            <person name="Hayashi Y."/>
            <person name="Hensch T.K."/>
            <person name="Hirokawa N."/>
            <person name="Hill D."/>
            <person name="Huminiecki L."/>
            <person name="Iacono M."/>
            <person name="Ikeo K."/>
            <person name="Iwama A."/>
            <person name="Ishikawa T."/>
            <person name="Jakt M."/>
            <person name="Kanapin A."/>
            <person name="Katoh M."/>
            <person name="Kawasawa Y."/>
            <person name="Kelso J."/>
            <person name="Kitamura H."/>
            <person name="Kitano H."/>
            <person name="Kollias G."/>
            <person name="Krishnan S.P."/>
            <person name="Kruger A."/>
            <person name="Kummerfeld S.K."/>
            <person name="Kurochkin I.V."/>
            <person name="Lareau L.F."/>
            <person name="Lazarevic D."/>
            <person name="Lipovich L."/>
            <person name="Liu J."/>
            <person name="Liuni S."/>
            <person name="McWilliam S."/>
            <person name="Madan Babu M."/>
            <person name="Madera M."/>
            <person name="Marchionni L."/>
            <person name="Matsuda H."/>
            <person name="Matsuzawa S."/>
            <person name="Miki H."/>
            <person name="Mignone F."/>
            <person name="Miyake S."/>
            <person name="Morris K."/>
            <person name="Mottagui-Tabar S."/>
            <person name="Mulder N."/>
            <person name="Nakano N."/>
            <person name="Nakauchi H."/>
            <person name="Ng P."/>
            <person name="Nilsson R."/>
            <person name="Nishiguchi S."/>
            <person name="Nishikawa S."/>
            <person name="Nori F."/>
            <person name="Ohara O."/>
            <person name="Okazaki Y."/>
            <person name="Orlando V."/>
            <person name="Pang K.C."/>
            <person name="Pavan W.J."/>
            <person name="Pavesi G."/>
            <person name="Pesole G."/>
            <person name="Petrovsky N."/>
            <person name="Piazza S."/>
            <person name="Reed J."/>
            <person name="Reid J.F."/>
            <person name="Ring B.Z."/>
            <person name="Ringwald M."/>
            <person name="Rost B."/>
            <person name="Ruan Y."/>
            <person name="Salzberg S.L."/>
            <person name="Sandelin A."/>
            <person name="Schneider C."/>
            <person name="Schoenbach C."/>
            <person name="Sekiguchi K."/>
            <person name="Semple C.A."/>
            <person name="Seno S."/>
            <person name="Sessa L."/>
            <person name="Sheng Y."/>
            <person name="Shibata Y."/>
            <person name="Shimada H."/>
            <person name="Shimada K."/>
            <person name="Silva D."/>
            <person name="Sinclair B."/>
            <person name="Sperling S."/>
            <person name="Stupka E."/>
            <person name="Sugiura K."/>
            <person name="Sultana R."/>
            <person name="Takenaka Y."/>
            <person name="Taki K."/>
            <person name="Tammoja K."/>
            <person name="Tan S.L."/>
            <person name="Tang S."/>
            <person name="Taylor M.S."/>
            <person name="Tegner J."/>
            <person name="Teichmann S.A."/>
            <person name="Ueda H.R."/>
            <person name="van Nimwegen E."/>
            <person name="Verardo R."/>
            <person name="Wei C.L."/>
            <person name="Yagi K."/>
            <person name="Yamanishi H."/>
            <person name="Zabarovsky E."/>
            <person name="Zhu S."/>
            <person name="Zimmer A."/>
            <person name="Hide W."/>
            <person name="Bult C."/>
            <person name="Grimmond S.M."/>
            <person name="Teasdale R.D."/>
            <person name="Liu E.T."/>
            <person name="Brusic V."/>
            <person name="Quackenbush J."/>
            <person name="Wahlestedt C."/>
            <person name="Mattick J.S."/>
            <person name="Hume D.A."/>
            <person name="Kai C."/>
            <person name="Sasaki D."/>
            <person name="Tomaru Y."/>
            <person name="Fukuda S."/>
            <person name="Kanamori-Katayama M."/>
            <person name="Suzuki M."/>
            <person name="Aoki J."/>
            <person name="Arakawa T."/>
            <person name="Iida J."/>
            <person name="Imamura K."/>
            <person name="Itoh M."/>
            <person name="Kato T."/>
            <person name="Kawaji H."/>
            <person name="Kawagashira N."/>
            <person name="Kawashima T."/>
            <person name="Kojima M."/>
            <person name="Kondo S."/>
            <person name="Konno H."/>
            <person name="Nakano K."/>
            <person name="Ninomiya N."/>
            <person name="Nishio T."/>
            <person name="Okada M."/>
            <person name="Plessy C."/>
            <person name="Shibata K."/>
            <person name="Shiraki T."/>
            <person name="Suzuki S."/>
            <person name="Tagami M."/>
            <person name="Waki K."/>
            <person name="Watahiki A."/>
            <person name="Okamura-Oho Y."/>
            <person name="Suzuki H."/>
            <person name="Kawai J."/>
            <person name="Hayashizaki Y."/>
        </authorList>
    </citation>
    <scope>NUCLEOTIDE SEQUENCE [LARGE SCALE MRNA]</scope>
    <source>
        <strain>C57BL/6J</strain>
        <strain>NOD</strain>
        <tissue>Cerebellum</tissue>
        <tissue>Head</tissue>
        <tissue>Testis</tissue>
        <tissue>Thymus</tissue>
    </source>
</reference>
<reference key="2">
    <citation type="journal article" date="2004" name="Genome Res.">
        <title>The status, quality, and expansion of the NIH full-length cDNA project: the Mammalian Gene Collection (MGC).</title>
        <authorList>
            <consortium name="The MGC Project Team"/>
        </authorList>
    </citation>
    <scope>NUCLEOTIDE SEQUENCE [LARGE SCALE MRNA]</scope>
    <source>
        <strain>C57BL/6J</strain>
        <tissue>Brain</tissue>
    </source>
</reference>
<reference key="3">
    <citation type="journal article" date="1998" name="J. Biol. Chem.">
        <title>Genetic evidence for the expression of ATP- and GTP-specific succinyl-CoA synthetases in multicellular eucaryotes.</title>
        <authorList>
            <person name="Johnson J.D."/>
            <person name="Mehus J.G."/>
            <person name="Tews K."/>
            <person name="Milavetz B.I."/>
            <person name="Lambeth D.O."/>
        </authorList>
    </citation>
    <scope>NUCLEOTIDE SEQUENCE [MRNA] OF 38-463</scope>
    <source>
        <tissue>Heart</tissue>
    </source>
</reference>
<reference key="4">
    <citation type="submission" date="2009-01" db="UniProtKB">
        <authorList>
            <person name="Lubec G."/>
            <person name="Kang S.U."/>
            <person name="Sunyer B."/>
            <person name="Chen W.-Q."/>
        </authorList>
    </citation>
    <scope>PROTEIN SEQUENCE OF 121-129; 206-215; 337-362 AND 443-451</scope>
    <scope>IDENTIFICATION BY MASS SPECTROMETRY</scope>
    <source>
        <strain>C57BL/6J</strain>
        <strain>OF1</strain>
        <tissue>Brain</tissue>
        <tissue>Hippocampus</tissue>
    </source>
</reference>
<reference key="5">
    <citation type="journal article" date="2007" name="Mol. Cell. Proteomics">
        <title>Qualitative and quantitative analyses of protein phosphorylation in naive and stimulated mouse synaptosomal preparations.</title>
        <authorList>
            <person name="Munton R.P."/>
            <person name="Tweedie-Cullen R."/>
            <person name="Livingstone-Zatchej M."/>
            <person name="Weinandy F."/>
            <person name="Waidelich M."/>
            <person name="Longo D."/>
            <person name="Gehrig P."/>
            <person name="Potthast F."/>
            <person name="Rutishauser D."/>
            <person name="Gerrits B."/>
            <person name="Panse C."/>
            <person name="Schlapbach R."/>
            <person name="Mansuy I.M."/>
        </authorList>
    </citation>
    <scope>IDENTIFICATION BY MASS SPECTROMETRY [LARGE SCALE ANALYSIS]</scope>
    <source>
        <tissue>Brain cortex</tissue>
    </source>
</reference>
<reference key="6">
    <citation type="journal article" date="2007" name="Proc. Natl. Acad. Sci. U.S.A.">
        <title>Large-scale phosphorylation analysis of mouse liver.</title>
        <authorList>
            <person name="Villen J."/>
            <person name="Beausoleil S.A."/>
            <person name="Gerber S.A."/>
            <person name="Gygi S.P."/>
        </authorList>
    </citation>
    <scope>IDENTIFICATION BY MASS SPECTROMETRY [LARGE SCALE ANALYSIS]</scope>
    <source>
        <tissue>Liver</tissue>
    </source>
</reference>
<reference key="7">
    <citation type="journal article" date="2010" name="Cell">
        <title>A tissue-specific atlas of mouse protein phosphorylation and expression.</title>
        <authorList>
            <person name="Huttlin E.L."/>
            <person name="Jedrychowski M.P."/>
            <person name="Elias J.E."/>
            <person name="Goswami T."/>
            <person name="Rad R."/>
            <person name="Beausoleil S.A."/>
            <person name="Villen J."/>
            <person name="Haas W."/>
            <person name="Sowa M.E."/>
            <person name="Gygi S.P."/>
        </authorList>
    </citation>
    <scope>PHOSPHORYLATION [LARGE SCALE ANALYSIS] AT SER-279 AND THR-341</scope>
    <scope>IDENTIFICATION BY MASS SPECTROMETRY [LARGE SCALE ANALYSIS]</scope>
    <source>
        <tissue>Brain</tissue>
        <tissue>Brown adipose tissue</tissue>
        <tissue>Heart</tissue>
        <tissue>Kidney</tissue>
        <tissue>Liver</tissue>
        <tissue>Lung</tissue>
        <tissue>Pancreas</tissue>
        <tissue>Spleen</tissue>
        <tissue>Testis</tissue>
    </source>
</reference>
<reference key="8">
    <citation type="journal article" date="2013" name="Mol. Cell">
        <title>SIRT5-mediated lysine desuccinylation impacts diverse metabolic pathways.</title>
        <authorList>
            <person name="Park J."/>
            <person name="Chen Y."/>
            <person name="Tishkoff D.X."/>
            <person name="Peng C."/>
            <person name="Tan M."/>
            <person name="Dai L."/>
            <person name="Xie Z."/>
            <person name="Zhang Y."/>
            <person name="Zwaans B.M."/>
            <person name="Skinner M.E."/>
            <person name="Lombard D.B."/>
            <person name="Zhao Y."/>
        </authorList>
    </citation>
    <scope>SUCCINYLATION [LARGE SCALE ANALYSIS] AT LYS-88</scope>
    <scope>IDENTIFICATION BY MASS SPECTROMETRY [LARGE SCALE ANALYSIS]</scope>
    <source>
        <tissue>Embryonic fibroblast</tissue>
    </source>
</reference>
<reference key="9">
    <citation type="journal article" date="2013" name="Proc. Natl. Acad. Sci. U.S.A.">
        <title>Label-free quantitative proteomics of the lysine acetylome in mitochondria identifies substrates of SIRT3 in metabolic pathways.</title>
        <authorList>
            <person name="Rardin M.J."/>
            <person name="Newman J.C."/>
            <person name="Held J.M."/>
            <person name="Cusack M.P."/>
            <person name="Sorensen D.J."/>
            <person name="Li B."/>
            <person name="Schilling B."/>
            <person name="Mooney S.D."/>
            <person name="Kahn C.R."/>
            <person name="Verdin E."/>
            <person name="Gibson B.W."/>
        </authorList>
    </citation>
    <scope>ACETYLATION [LARGE SCALE ANALYSIS] AT LYS-78; LYS-88; LYS-129; LYS-139; LYS-216; LYS-368 AND LYS-438</scope>
    <scope>IDENTIFICATION BY MASS SPECTROMETRY [LARGE SCALE ANALYSIS]</scope>
    <source>
        <tissue>Liver</tissue>
    </source>
</reference>
<accession>Q9Z2I9</accession>
<accession>Q3TVH1</accession>
<accession>Q8BGS6</accession>
<dbReference type="EC" id="6.2.1.5" evidence="2"/>
<dbReference type="EMBL" id="AK081965">
    <property type="protein sequence ID" value="BAC38380.1"/>
    <property type="molecule type" value="mRNA"/>
</dbReference>
<dbReference type="EMBL" id="AK088801">
    <property type="protein sequence ID" value="BAC40580.1"/>
    <property type="molecule type" value="mRNA"/>
</dbReference>
<dbReference type="EMBL" id="AK132762">
    <property type="protein sequence ID" value="BAE21343.1"/>
    <property type="molecule type" value="mRNA"/>
</dbReference>
<dbReference type="EMBL" id="AK160130">
    <property type="protein sequence ID" value="BAE35647.1"/>
    <property type="molecule type" value="mRNA"/>
</dbReference>
<dbReference type="EMBL" id="AK160652">
    <property type="protein sequence ID" value="BAE35942.1"/>
    <property type="molecule type" value="mRNA"/>
</dbReference>
<dbReference type="EMBL" id="BC056353">
    <property type="protein sequence ID" value="AAH56353.1"/>
    <property type="molecule type" value="mRNA"/>
</dbReference>
<dbReference type="EMBL" id="BC057605">
    <property type="protein sequence ID" value="AAH57605.1"/>
    <property type="molecule type" value="mRNA"/>
</dbReference>
<dbReference type="EMBL" id="AF058955">
    <property type="protein sequence ID" value="AAC64398.1"/>
    <property type="molecule type" value="mRNA"/>
</dbReference>
<dbReference type="CCDS" id="CCDS27271.1"/>
<dbReference type="RefSeq" id="NP_035636.1">
    <property type="nucleotide sequence ID" value="NM_011506.4"/>
</dbReference>
<dbReference type="SMR" id="Q9Z2I9"/>
<dbReference type="BioGRID" id="203570">
    <property type="interactions" value="66"/>
</dbReference>
<dbReference type="CORUM" id="Q9Z2I9"/>
<dbReference type="FunCoup" id="Q9Z2I9">
    <property type="interactions" value="2477"/>
</dbReference>
<dbReference type="IntAct" id="Q9Z2I9">
    <property type="interactions" value="10"/>
</dbReference>
<dbReference type="STRING" id="10090.ENSMUSP00000123765"/>
<dbReference type="GlyGen" id="Q9Z2I9">
    <property type="glycosylation" value="2 sites, 1 O-linked glycan (2 sites)"/>
</dbReference>
<dbReference type="iPTMnet" id="Q9Z2I9"/>
<dbReference type="PhosphoSitePlus" id="Q9Z2I9"/>
<dbReference type="SwissPalm" id="Q9Z2I9"/>
<dbReference type="REPRODUCTION-2DPAGE" id="IPI00261627"/>
<dbReference type="REPRODUCTION-2DPAGE" id="Q9Z2I9"/>
<dbReference type="jPOST" id="Q9Z2I9"/>
<dbReference type="PaxDb" id="10090-ENSMUSP00000123765"/>
<dbReference type="PeptideAtlas" id="Q9Z2I9"/>
<dbReference type="ProteomicsDB" id="258670"/>
<dbReference type="Pumba" id="Q9Z2I9"/>
<dbReference type="Antibodypedia" id="23774">
    <property type="antibodies" value="128 antibodies from 28 providers"/>
</dbReference>
<dbReference type="DNASU" id="20916"/>
<dbReference type="Ensembl" id="ENSMUST00000022706.7">
    <property type="protein sequence ID" value="ENSMUSP00000022706.7"/>
    <property type="gene ID" value="ENSMUSG00000022110.14"/>
</dbReference>
<dbReference type="Ensembl" id="ENSMUST00000160507.8">
    <property type="protein sequence ID" value="ENSMUSP00000123765.2"/>
    <property type="gene ID" value="ENSMUSG00000022110.14"/>
</dbReference>
<dbReference type="GeneID" id="20916"/>
<dbReference type="KEGG" id="mmu:20916"/>
<dbReference type="UCSC" id="uc007upx.1">
    <property type="organism name" value="mouse"/>
</dbReference>
<dbReference type="AGR" id="MGI:1306775"/>
<dbReference type="CTD" id="8803"/>
<dbReference type="MGI" id="MGI:1306775">
    <property type="gene designation" value="Sucla2"/>
</dbReference>
<dbReference type="VEuPathDB" id="HostDB:ENSMUSG00000022110"/>
<dbReference type="eggNOG" id="KOG2799">
    <property type="taxonomic scope" value="Eukaryota"/>
</dbReference>
<dbReference type="GeneTree" id="ENSGT00390000010170"/>
<dbReference type="HOGENOM" id="CLU_037430_0_0_1"/>
<dbReference type="InParanoid" id="Q9Z2I9"/>
<dbReference type="OMA" id="ITACDEV"/>
<dbReference type="OrthoDB" id="1552at2759"/>
<dbReference type="PhylomeDB" id="Q9Z2I9"/>
<dbReference type="TreeFam" id="TF300624"/>
<dbReference type="BRENDA" id="6.2.1.5">
    <property type="organism ID" value="3474"/>
</dbReference>
<dbReference type="Reactome" id="R-MMU-71403">
    <property type="pathway name" value="Citric acid cycle (TCA cycle)"/>
</dbReference>
<dbReference type="UniPathway" id="UPA00223">
    <property type="reaction ID" value="UER00999"/>
</dbReference>
<dbReference type="BioGRID-ORCS" id="20916">
    <property type="hits" value="5 hits in 78 CRISPR screens"/>
</dbReference>
<dbReference type="CD-CODE" id="CE726F99">
    <property type="entry name" value="Postsynaptic density"/>
</dbReference>
<dbReference type="ChiTaRS" id="Sucla2">
    <property type="organism name" value="mouse"/>
</dbReference>
<dbReference type="PRO" id="PR:Q9Z2I9"/>
<dbReference type="Proteomes" id="UP000000589">
    <property type="component" value="Chromosome 14"/>
</dbReference>
<dbReference type="RNAct" id="Q9Z2I9">
    <property type="molecule type" value="protein"/>
</dbReference>
<dbReference type="Bgee" id="ENSMUSG00000022110">
    <property type="expression patterns" value="Expressed in atrioventricular valve and 269 other cell types or tissues"/>
</dbReference>
<dbReference type="GO" id="GO:0005739">
    <property type="term" value="C:mitochondrion"/>
    <property type="evidence" value="ECO:0007005"/>
    <property type="project" value="MGI"/>
</dbReference>
<dbReference type="GO" id="GO:0043209">
    <property type="term" value="C:myelin sheath"/>
    <property type="evidence" value="ECO:0007005"/>
    <property type="project" value="UniProtKB"/>
</dbReference>
<dbReference type="GO" id="GO:0005524">
    <property type="term" value="F:ATP binding"/>
    <property type="evidence" value="ECO:0007669"/>
    <property type="project" value="UniProtKB-UniRule"/>
</dbReference>
<dbReference type="GO" id="GO:0000287">
    <property type="term" value="F:magnesium ion binding"/>
    <property type="evidence" value="ECO:0007669"/>
    <property type="project" value="UniProtKB-UniRule"/>
</dbReference>
<dbReference type="GO" id="GO:0004775">
    <property type="term" value="F:succinate-CoA ligase (ADP-forming) activity"/>
    <property type="evidence" value="ECO:0007669"/>
    <property type="project" value="UniProtKB-UniRule"/>
</dbReference>
<dbReference type="GO" id="GO:0004774">
    <property type="term" value="F:succinate-CoA ligase activity"/>
    <property type="evidence" value="ECO:0000250"/>
    <property type="project" value="MGI"/>
</dbReference>
<dbReference type="GO" id="GO:0006105">
    <property type="term" value="P:succinate metabolic process"/>
    <property type="evidence" value="ECO:0007669"/>
    <property type="project" value="Ensembl"/>
</dbReference>
<dbReference type="GO" id="GO:0006104">
    <property type="term" value="P:succinyl-CoA metabolic process"/>
    <property type="evidence" value="ECO:0007669"/>
    <property type="project" value="Ensembl"/>
</dbReference>
<dbReference type="GO" id="GO:0006099">
    <property type="term" value="P:tricarboxylic acid cycle"/>
    <property type="evidence" value="ECO:0007669"/>
    <property type="project" value="UniProtKB-UniRule"/>
</dbReference>
<dbReference type="FunFam" id="3.30.470.20:FF:000002">
    <property type="entry name" value="Succinate--CoA ligase [ADP-forming] subunit beta"/>
    <property type="match status" value="1"/>
</dbReference>
<dbReference type="FunFam" id="3.40.50.261:FF:000001">
    <property type="entry name" value="Succinate--CoA ligase [ADP-forming] subunit beta"/>
    <property type="match status" value="1"/>
</dbReference>
<dbReference type="FunFam" id="3.30.1490.20:FF:000040">
    <property type="entry name" value="Succinate--CoA ligase [ADP-forming] subunit beta mitochondrial"/>
    <property type="match status" value="1"/>
</dbReference>
<dbReference type="Gene3D" id="3.30.1490.20">
    <property type="entry name" value="ATP-grasp fold, A domain"/>
    <property type="match status" value="1"/>
</dbReference>
<dbReference type="Gene3D" id="3.30.470.20">
    <property type="entry name" value="ATP-grasp fold, B domain"/>
    <property type="match status" value="1"/>
</dbReference>
<dbReference type="Gene3D" id="3.40.50.261">
    <property type="entry name" value="Succinyl-CoA synthetase domains"/>
    <property type="match status" value="1"/>
</dbReference>
<dbReference type="HAMAP" id="MF_00558">
    <property type="entry name" value="Succ_CoA_beta"/>
    <property type="match status" value="1"/>
</dbReference>
<dbReference type="HAMAP" id="MF_03220">
    <property type="entry name" value="Succ_CoA_betaA_euk"/>
    <property type="match status" value="1"/>
</dbReference>
<dbReference type="InterPro" id="IPR011761">
    <property type="entry name" value="ATP-grasp"/>
</dbReference>
<dbReference type="InterPro" id="IPR013650">
    <property type="entry name" value="ATP-grasp_succ-CoA_synth-type"/>
</dbReference>
<dbReference type="InterPro" id="IPR013815">
    <property type="entry name" value="ATP_grasp_subdomain_1"/>
</dbReference>
<dbReference type="InterPro" id="IPR017866">
    <property type="entry name" value="Succ-CoA_synthase_bsu_CS"/>
</dbReference>
<dbReference type="InterPro" id="IPR005811">
    <property type="entry name" value="SUCC_ACL_C"/>
</dbReference>
<dbReference type="InterPro" id="IPR034723">
    <property type="entry name" value="Succ_CoA_betaA_euk"/>
</dbReference>
<dbReference type="InterPro" id="IPR005809">
    <property type="entry name" value="Succ_CoA_ligase-like_bsu"/>
</dbReference>
<dbReference type="InterPro" id="IPR016102">
    <property type="entry name" value="Succinyl-CoA_synth-like"/>
</dbReference>
<dbReference type="NCBIfam" id="NF001913">
    <property type="entry name" value="PRK00696.1"/>
    <property type="match status" value="1"/>
</dbReference>
<dbReference type="NCBIfam" id="TIGR01016">
    <property type="entry name" value="sucCoAbeta"/>
    <property type="match status" value="1"/>
</dbReference>
<dbReference type="PANTHER" id="PTHR11815:SF1">
    <property type="entry name" value="SUCCINATE--COA LIGASE [ADP-FORMING] SUBUNIT BETA, MITOCHONDRIAL"/>
    <property type="match status" value="1"/>
</dbReference>
<dbReference type="PANTHER" id="PTHR11815">
    <property type="entry name" value="SUCCINYL-COA SYNTHETASE BETA CHAIN"/>
    <property type="match status" value="1"/>
</dbReference>
<dbReference type="Pfam" id="PF08442">
    <property type="entry name" value="ATP-grasp_2"/>
    <property type="match status" value="1"/>
</dbReference>
<dbReference type="Pfam" id="PF00549">
    <property type="entry name" value="Ligase_CoA"/>
    <property type="match status" value="1"/>
</dbReference>
<dbReference type="PIRSF" id="PIRSF001554">
    <property type="entry name" value="SucCS_beta"/>
    <property type="match status" value="1"/>
</dbReference>
<dbReference type="SUPFAM" id="SSF56059">
    <property type="entry name" value="Glutathione synthetase ATP-binding domain-like"/>
    <property type="match status" value="1"/>
</dbReference>
<dbReference type="SUPFAM" id="SSF52210">
    <property type="entry name" value="Succinyl-CoA synthetase domains"/>
    <property type="match status" value="1"/>
</dbReference>
<dbReference type="PROSITE" id="PS50975">
    <property type="entry name" value="ATP_GRASP"/>
    <property type="match status" value="1"/>
</dbReference>
<dbReference type="PROSITE" id="PS01217">
    <property type="entry name" value="SUCCINYL_COA_LIG_3"/>
    <property type="match status" value="1"/>
</dbReference>
<sequence length="463" mass="50114">MAASMFYGRQLAAAALRSHRPQTTLRAAAQVLGNSGLFNKHGLQVQQQQQRTLSLHEYLSMELLQEAGVSVPKGFVAKSSDEAYAIAKKLGSKDVVIKAQVLAGGRGKGTFTSGLKGGVKIVFSPEEAKAVSSQMIGQKLITKQTGEKGRICNQVLVCERKYPRREYYFAITMERSFQGPVLIGSAQGGVNIEDVAAENPEAIVKEPIDIVEGIKKEQAVTLAQKMGFPSNIVDSAAENMIKLYNLFLKYDATMVEINPMVEDSDGKVLCMDAKINFDSNSAYRQKKIFDLQDWSQEDERDKEAANADINYIGLDGSIGCLVNGAGLAMATMDIIKLHGGTPANFLDVGGGATVQQVTEAFKLITSDKKVQAILVNIFGGIMRCDVIAQGIVMAVKDLEIRIPVVVRLQGTRVDDAKALIADSGLKILACDDLDEAAKMVVKLSEIVTLAKEAHVDVKFQLPI</sequence>
<keyword id="KW-0007">Acetylation</keyword>
<keyword id="KW-0067">ATP-binding</keyword>
<keyword id="KW-0903">Direct protein sequencing</keyword>
<keyword id="KW-0436">Ligase</keyword>
<keyword id="KW-0460">Magnesium</keyword>
<keyword id="KW-0479">Metal-binding</keyword>
<keyword id="KW-0496">Mitochondrion</keyword>
<keyword id="KW-0547">Nucleotide-binding</keyword>
<keyword id="KW-0597">Phosphoprotein</keyword>
<keyword id="KW-1185">Reference proteome</keyword>
<keyword id="KW-0809">Transit peptide</keyword>
<keyword id="KW-0816">Tricarboxylic acid cycle</keyword>
<gene>
    <name evidence="2" type="primary">Sucla2</name>
</gene>
<comment type="function">
    <text evidence="2">ATP-specific succinyl-CoA synthetase functions in the citric acid cycle (TCA), coupling the hydrolysis of succinyl-CoA to the synthesis of ATP and thus represents the only step of substrate-level phosphorylation in the TCA. The beta subunit provides nucleotide specificity of the enzyme and binds the substrate succinate, while the binding sites for coenzyme A and phosphate are found in the alpha subunit.</text>
</comment>
<comment type="catalytic activity">
    <reaction evidence="2">
        <text>succinate + ATP + CoA = succinyl-CoA + ADP + phosphate</text>
        <dbReference type="Rhea" id="RHEA:17661"/>
        <dbReference type="ChEBI" id="CHEBI:30031"/>
        <dbReference type="ChEBI" id="CHEBI:30616"/>
        <dbReference type="ChEBI" id="CHEBI:43474"/>
        <dbReference type="ChEBI" id="CHEBI:57287"/>
        <dbReference type="ChEBI" id="CHEBI:57292"/>
        <dbReference type="ChEBI" id="CHEBI:456216"/>
        <dbReference type="EC" id="6.2.1.5"/>
    </reaction>
</comment>
<comment type="cofactor">
    <cofactor evidence="2">
        <name>Mg(2+)</name>
        <dbReference type="ChEBI" id="CHEBI:18420"/>
    </cofactor>
    <text evidence="2">Binds 1 Mg(2+) ion per subunit.</text>
</comment>
<comment type="pathway">
    <text evidence="2">Carbohydrate metabolism; tricarboxylic acid cycle; succinate from succinyl-CoA (ligase route): step 1/1.</text>
</comment>
<comment type="subunit">
    <text evidence="1 2">Heterodimer of an alpha and a beta subunit. The beta subunit determines specificity for ATP. Interacts with ALAS2 (By similarity).</text>
</comment>
<comment type="subcellular location">
    <subcellularLocation>
        <location evidence="2">Mitochondrion</location>
    </subcellularLocation>
</comment>
<comment type="similarity">
    <text evidence="2">Belongs to the succinate/malate CoA ligase beta subunit family. ATP-specific subunit beta subfamily.</text>
</comment>
<proteinExistence type="evidence at protein level"/>
<organism>
    <name type="scientific">Mus musculus</name>
    <name type="common">Mouse</name>
    <dbReference type="NCBI Taxonomy" id="10090"/>
    <lineage>
        <taxon>Eukaryota</taxon>
        <taxon>Metazoa</taxon>
        <taxon>Chordata</taxon>
        <taxon>Craniata</taxon>
        <taxon>Vertebrata</taxon>
        <taxon>Euteleostomi</taxon>
        <taxon>Mammalia</taxon>
        <taxon>Eutheria</taxon>
        <taxon>Euarchontoglires</taxon>
        <taxon>Glires</taxon>
        <taxon>Rodentia</taxon>
        <taxon>Myomorpha</taxon>
        <taxon>Muroidea</taxon>
        <taxon>Muridae</taxon>
        <taxon>Murinae</taxon>
        <taxon>Mus</taxon>
        <taxon>Mus</taxon>
    </lineage>
</organism>
<name>SUCB1_MOUSE</name>
<evidence type="ECO:0000250" key="1">
    <source>
        <dbReference type="UniProtKB" id="Q9P2R7"/>
    </source>
</evidence>
<evidence type="ECO:0000255" key="2">
    <source>
        <dbReference type="HAMAP-Rule" id="MF_03220"/>
    </source>
</evidence>
<evidence type="ECO:0007744" key="3">
    <source>
    </source>
</evidence>
<evidence type="ECO:0007744" key="4">
    <source>
    </source>
</evidence>
<evidence type="ECO:0007744" key="5">
    <source>
    </source>
</evidence>